<sequence>MTVDRLTSRSRAAGUAAKIAPGDLERILATLPRDPREGERVVVGTRDNEDAAIVRVPGGKAIVQTLDFFTPIVDDPYLFGQIAAANALSDVYAMGGEPWCALNIVCFPVKELPEDILADILRGGADKVREAGAVLVGGHSIEDESIKYGLSVTGIIDPDCYATNTGLRPGDVLLLTKPLGSGVLATAVKAGWDGFEAHEQELGRWGAMLNRAGGRVIRELGLAAATDVTGFGLGGHLLEMANASNMSVHVDVSTLPLMPAVLDLVATGLLPAGSHANRHFCSGNVSVHPEVDSLLVDIVFDAQTSGGLILAVPPHLVDDACSILRAEDAPFWRIGHVEEMGEGVPRLVLQP</sequence>
<comment type="function">
    <text evidence="2">Synthesizes selenophosphate from selenide and ATP.</text>
</comment>
<comment type="catalytic activity">
    <reaction evidence="2">
        <text>hydrogenselenide + ATP + H2O = selenophosphate + AMP + phosphate + 2 H(+)</text>
        <dbReference type="Rhea" id="RHEA:18737"/>
        <dbReference type="ChEBI" id="CHEBI:15377"/>
        <dbReference type="ChEBI" id="CHEBI:15378"/>
        <dbReference type="ChEBI" id="CHEBI:16144"/>
        <dbReference type="ChEBI" id="CHEBI:29317"/>
        <dbReference type="ChEBI" id="CHEBI:30616"/>
        <dbReference type="ChEBI" id="CHEBI:43474"/>
        <dbReference type="ChEBI" id="CHEBI:456215"/>
        <dbReference type="EC" id="2.7.9.3"/>
    </reaction>
</comment>
<comment type="cofactor">
    <cofactor evidence="2">
        <name>Mg(2+)</name>
        <dbReference type="ChEBI" id="CHEBI:18420"/>
    </cofactor>
    <text evidence="2">Binds 1 Mg(2+) ion per monomer.</text>
</comment>
<comment type="subunit">
    <text evidence="2">Homodimer.</text>
</comment>
<comment type="similarity">
    <text evidence="2">Belongs to the selenophosphate synthase 1 family. Class I subfamily.</text>
</comment>
<protein>
    <recommendedName>
        <fullName evidence="2">Selenide, water dikinase</fullName>
        <ecNumber evidence="2">2.7.9.3</ecNumber>
    </recommendedName>
    <alternativeName>
        <fullName evidence="2">Selenium donor protein</fullName>
    </alternativeName>
    <alternativeName>
        <fullName evidence="2">Selenophosphate synthase</fullName>
    </alternativeName>
</protein>
<dbReference type="EC" id="2.7.9.3" evidence="2"/>
<dbReference type="EMBL" id="AE017285">
    <property type="protein sequence ID" value="AAS95810.1"/>
    <property type="molecule type" value="Genomic_DNA"/>
</dbReference>
<dbReference type="RefSeq" id="WP_010938627.1">
    <property type="nucleotide sequence ID" value="NC_002937.3"/>
</dbReference>
<dbReference type="RefSeq" id="YP_010551.1">
    <property type="nucleotide sequence ID" value="NC_002937.3"/>
</dbReference>
<dbReference type="STRING" id="882.DVU_1332"/>
<dbReference type="PaxDb" id="882-DVU_1332"/>
<dbReference type="KEGG" id="dvu:DVU_1332"/>
<dbReference type="PATRIC" id="fig|882.5.peg.1244"/>
<dbReference type="eggNOG" id="COG0709">
    <property type="taxonomic scope" value="Bacteria"/>
</dbReference>
<dbReference type="HOGENOM" id="CLU_032859_0_1_7"/>
<dbReference type="OrthoDB" id="9767928at2"/>
<dbReference type="PhylomeDB" id="Q72CF1"/>
<dbReference type="Proteomes" id="UP000002194">
    <property type="component" value="Chromosome"/>
</dbReference>
<dbReference type="GO" id="GO:0005737">
    <property type="term" value="C:cytoplasm"/>
    <property type="evidence" value="ECO:0007669"/>
    <property type="project" value="TreeGrafter"/>
</dbReference>
<dbReference type="GO" id="GO:0005524">
    <property type="term" value="F:ATP binding"/>
    <property type="evidence" value="ECO:0007669"/>
    <property type="project" value="UniProtKB-UniRule"/>
</dbReference>
<dbReference type="GO" id="GO:0000287">
    <property type="term" value="F:magnesium ion binding"/>
    <property type="evidence" value="ECO:0007669"/>
    <property type="project" value="UniProtKB-UniRule"/>
</dbReference>
<dbReference type="GO" id="GO:0004756">
    <property type="term" value="F:selenide, water dikinase activity"/>
    <property type="evidence" value="ECO:0007669"/>
    <property type="project" value="UniProtKB-UniRule"/>
</dbReference>
<dbReference type="GO" id="GO:0016260">
    <property type="term" value="P:selenocysteine biosynthetic process"/>
    <property type="evidence" value="ECO:0007669"/>
    <property type="project" value="InterPro"/>
</dbReference>
<dbReference type="CDD" id="cd02195">
    <property type="entry name" value="SelD"/>
    <property type="match status" value="1"/>
</dbReference>
<dbReference type="FunFam" id="3.30.1330.10:FF:000003">
    <property type="entry name" value="Selenide, water dikinase"/>
    <property type="match status" value="1"/>
</dbReference>
<dbReference type="Gene3D" id="3.90.650.10">
    <property type="entry name" value="PurM-like C-terminal domain"/>
    <property type="match status" value="1"/>
</dbReference>
<dbReference type="Gene3D" id="3.30.1330.10">
    <property type="entry name" value="PurM-like, N-terminal domain"/>
    <property type="match status" value="1"/>
</dbReference>
<dbReference type="HAMAP" id="MF_00625">
    <property type="entry name" value="SelD"/>
    <property type="match status" value="1"/>
</dbReference>
<dbReference type="InterPro" id="IPR010918">
    <property type="entry name" value="PurM-like_C_dom"/>
</dbReference>
<dbReference type="InterPro" id="IPR036676">
    <property type="entry name" value="PurM-like_C_sf"/>
</dbReference>
<dbReference type="InterPro" id="IPR016188">
    <property type="entry name" value="PurM-like_N"/>
</dbReference>
<dbReference type="InterPro" id="IPR036921">
    <property type="entry name" value="PurM-like_N_sf"/>
</dbReference>
<dbReference type="InterPro" id="IPR023061">
    <property type="entry name" value="SelD_I"/>
</dbReference>
<dbReference type="InterPro" id="IPR004536">
    <property type="entry name" value="SPS/SelD"/>
</dbReference>
<dbReference type="NCBIfam" id="NF002098">
    <property type="entry name" value="PRK00943.1"/>
    <property type="match status" value="1"/>
</dbReference>
<dbReference type="NCBIfam" id="TIGR00476">
    <property type="entry name" value="selD"/>
    <property type="match status" value="1"/>
</dbReference>
<dbReference type="PANTHER" id="PTHR10256:SF0">
    <property type="entry name" value="INACTIVE SELENIDE, WATER DIKINASE-LIKE PROTEIN-RELATED"/>
    <property type="match status" value="1"/>
</dbReference>
<dbReference type="PANTHER" id="PTHR10256">
    <property type="entry name" value="SELENIDE, WATER DIKINASE"/>
    <property type="match status" value="1"/>
</dbReference>
<dbReference type="Pfam" id="PF00586">
    <property type="entry name" value="AIRS"/>
    <property type="match status" value="1"/>
</dbReference>
<dbReference type="Pfam" id="PF02769">
    <property type="entry name" value="AIRS_C"/>
    <property type="match status" value="1"/>
</dbReference>
<dbReference type="PIRSF" id="PIRSF036407">
    <property type="entry name" value="Selenphspht_syn"/>
    <property type="match status" value="1"/>
</dbReference>
<dbReference type="SUPFAM" id="SSF56042">
    <property type="entry name" value="PurM C-terminal domain-like"/>
    <property type="match status" value="1"/>
</dbReference>
<dbReference type="SUPFAM" id="SSF55326">
    <property type="entry name" value="PurM N-terminal domain-like"/>
    <property type="match status" value="1"/>
</dbReference>
<organism>
    <name type="scientific">Nitratidesulfovibrio vulgaris (strain ATCC 29579 / DSM 644 / CCUG 34227 / NCIMB 8303 / VKM B-1760 / Hildenborough)</name>
    <name type="common">Desulfovibrio vulgaris</name>
    <dbReference type="NCBI Taxonomy" id="882"/>
    <lineage>
        <taxon>Bacteria</taxon>
        <taxon>Pseudomonadati</taxon>
        <taxon>Thermodesulfobacteriota</taxon>
        <taxon>Desulfovibrionia</taxon>
        <taxon>Desulfovibrionales</taxon>
        <taxon>Desulfovibrionaceae</taxon>
        <taxon>Nitratidesulfovibrio</taxon>
    </lineage>
</organism>
<keyword id="KW-0067">ATP-binding</keyword>
<keyword id="KW-0418">Kinase</keyword>
<keyword id="KW-0460">Magnesium</keyword>
<keyword id="KW-0479">Metal-binding</keyword>
<keyword id="KW-0547">Nucleotide-binding</keyword>
<keyword id="KW-1185">Reference proteome</keyword>
<keyword id="KW-0711">Selenium</keyword>
<keyword id="KW-0712">Selenocysteine</keyword>
<keyword id="KW-0808">Transferase</keyword>
<reference key="1">
    <citation type="journal article" date="2004" name="Nat. Biotechnol.">
        <title>The genome sequence of the anaerobic, sulfate-reducing bacterium Desulfovibrio vulgaris Hildenborough.</title>
        <authorList>
            <person name="Heidelberg J.F."/>
            <person name="Seshadri R."/>
            <person name="Haveman S.A."/>
            <person name="Hemme C.L."/>
            <person name="Paulsen I.T."/>
            <person name="Kolonay J.F."/>
            <person name="Eisen J.A."/>
            <person name="Ward N.L."/>
            <person name="Methe B.A."/>
            <person name="Brinkac L.M."/>
            <person name="Daugherty S.C."/>
            <person name="DeBoy R.T."/>
            <person name="Dodson R.J."/>
            <person name="Durkin A.S."/>
            <person name="Madupu R."/>
            <person name="Nelson W.C."/>
            <person name="Sullivan S.A."/>
            <person name="Fouts D.E."/>
            <person name="Haft D.H."/>
            <person name="Selengut J."/>
            <person name="Peterson J.D."/>
            <person name="Davidsen T.M."/>
            <person name="Zafar N."/>
            <person name="Zhou L."/>
            <person name="Radune D."/>
            <person name="Dimitrov G."/>
            <person name="Hance M."/>
            <person name="Tran K."/>
            <person name="Khouri H.M."/>
            <person name="Gill J."/>
            <person name="Utterback T.R."/>
            <person name="Feldblyum T.V."/>
            <person name="Wall J.D."/>
            <person name="Voordouw G."/>
            <person name="Fraser C.M."/>
        </authorList>
    </citation>
    <scope>NUCLEOTIDE SEQUENCE [LARGE SCALE GENOMIC DNA]</scope>
    <source>
        <strain>ATCC 29579 / DSM 644 / CCUG 34227 / NCIMB 8303 / VKM B-1760 / Hildenborough</strain>
    </source>
</reference>
<proteinExistence type="inferred from homology"/>
<accession>Q72CF1</accession>
<evidence type="ECO:0000255" key="1"/>
<evidence type="ECO:0000255" key="2">
    <source>
        <dbReference type="HAMAP-Rule" id="MF_00625"/>
    </source>
</evidence>
<feature type="chain" id="PRO_0000127619" description="Selenide, water dikinase">
    <location>
        <begin position="1"/>
        <end position="351"/>
    </location>
</feature>
<feature type="active site" evidence="2">
    <location>
        <position position="15"/>
    </location>
</feature>
<feature type="binding site" description="in other chain" evidence="2">
    <location>
        <position position="18"/>
    </location>
    <ligand>
        <name>ATP</name>
        <dbReference type="ChEBI" id="CHEBI:30616"/>
        <note>ligand shared between dimeric partners</note>
    </ligand>
</feature>
<feature type="binding site" description="in other chain" evidence="2">
    <location>
        <begin position="47"/>
        <end position="49"/>
    </location>
    <ligand>
        <name>ATP</name>
        <dbReference type="ChEBI" id="CHEBI:30616"/>
        <note>ligand shared between dimeric partners</note>
    </ligand>
</feature>
<feature type="binding site" evidence="2">
    <location>
        <position position="50"/>
    </location>
    <ligand>
        <name>Mg(2+)</name>
        <dbReference type="ChEBI" id="CHEBI:18420"/>
    </ligand>
</feature>
<feature type="binding site" description="in other chain" evidence="2">
    <location>
        <position position="67"/>
    </location>
    <ligand>
        <name>ATP</name>
        <dbReference type="ChEBI" id="CHEBI:30616"/>
        <note>ligand shared between dimeric partners</note>
    </ligand>
</feature>
<feature type="binding site" description="in other chain" evidence="2">
    <location>
        <position position="90"/>
    </location>
    <ligand>
        <name>ATP</name>
        <dbReference type="ChEBI" id="CHEBI:30616"/>
        <note>ligand shared between dimeric partners</note>
    </ligand>
</feature>
<feature type="binding site" evidence="2">
    <location>
        <position position="90"/>
    </location>
    <ligand>
        <name>Mg(2+)</name>
        <dbReference type="ChEBI" id="CHEBI:18420"/>
    </ligand>
</feature>
<feature type="binding site" evidence="2">
    <location>
        <begin position="138"/>
        <end position="140"/>
    </location>
    <ligand>
        <name>ATP</name>
        <dbReference type="ChEBI" id="CHEBI:30616"/>
        <note>ligand shared between dimeric partners</note>
    </ligand>
</feature>
<feature type="binding site" evidence="2">
    <location>
        <position position="227"/>
    </location>
    <ligand>
        <name>Mg(2+)</name>
        <dbReference type="ChEBI" id="CHEBI:18420"/>
    </ligand>
</feature>
<feature type="site" description="Important for catalytic activity" evidence="2">
    <location>
        <position position="18"/>
    </location>
</feature>
<feature type="non-standard amino acid" description="Selenocysteine" evidence="1">
    <location>
        <position position="15"/>
    </location>
</feature>
<gene>
    <name evidence="2" type="primary">selD</name>
    <name type="ordered locus">DVU_1332</name>
</gene>
<name>SELD_NITV2</name>